<sequence length="98" mass="10763">MTLIHMNILMAFSMSLMGLLMYRSHLMSALLCLEGMMLSLFVLAALTILSSHFTLANMMPIILLVFAACEAAIGLALLVMVSNTYGTDYVQNLNLLQC</sequence>
<protein>
    <recommendedName>
        <fullName>NADH-ubiquinone oxidoreductase chain 4L</fullName>
        <ecNumber>7.1.1.2</ecNumber>
    </recommendedName>
    <alternativeName>
        <fullName>NADH dehydrogenase subunit 4L</fullName>
    </alternativeName>
</protein>
<keyword id="KW-0249">Electron transport</keyword>
<keyword id="KW-0472">Membrane</keyword>
<keyword id="KW-0496">Mitochondrion</keyword>
<keyword id="KW-0999">Mitochondrion inner membrane</keyword>
<keyword id="KW-0520">NAD</keyword>
<keyword id="KW-0679">Respiratory chain</keyword>
<keyword id="KW-1278">Translocase</keyword>
<keyword id="KW-0812">Transmembrane</keyword>
<keyword id="KW-1133">Transmembrane helix</keyword>
<keyword id="KW-0813">Transport</keyword>
<keyword id="KW-0830">Ubiquinone</keyword>
<evidence type="ECO:0000250" key="1">
    <source>
        <dbReference type="UniProtKB" id="P03901"/>
    </source>
</evidence>
<evidence type="ECO:0000250" key="2">
    <source>
        <dbReference type="UniProtKB" id="P03902"/>
    </source>
</evidence>
<evidence type="ECO:0000255" key="3"/>
<evidence type="ECO:0000305" key="4"/>
<accession>P24976</accession>
<feature type="chain" id="PRO_0000118395" description="NADH-ubiquinone oxidoreductase chain 4L">
    <location>
        <begin position="1"/>
        <end position="98"/>
    </location>
</feature>
<feature type="transmembrane region" description="Helical" evidence="3">
    <location>
        <begin position="1"/>
        <end position="21"/>
    </location>
</feature>
<feature type="transmembrane region" description="Helical" evidence="3">
    <location>
        <begin position="29"/>
        <end position="49"/>
    </location>
</feature>
<feature type="transmembrane region" description="Helical" evidence="3">
    <location>
        <begin position="61"/>
        <end position="81"/>
    </location>
</feature>
<dbReference type="EC" id="7.1.1.2"/>
<dbReference type="EMBL" id="X61145">
    <property type="protein sequence ID" value="CAA43447.1"/>
    <property type="molecule type" value="Genomic_DNA"/>
</dbReference>
<dbReference type="PIR" id="A58851">
    <property type="entry name" value="S24920"/>
</dbReference>
<dbReference type="RefSeq" id="NP_006897.1">
    <property type="nucleotide sequence ID" value="NC_001321.1"/>
</dbReference>
<dbReference type="SMR" id="P24976"/>
<dbReference type="GeneID" id="807617"/>
<dbReference type="CTD" id="4539"/>
<dbReference type="GO" id="GO:0005743">
    <property type="term" value="C:mitochondrial inner membrane"/>
    <property type="evidence" value="ECO:0000250"/>
    <property type="project" value="UniProtKB"/>
</dbReference>
<dbReference type="GO" id="GO:0045271">
    <property type="term" value="C:respiratory chain complex I"/>
    <property type="evidence" value="ECO:0000250"/>
    <property type="project" value="UniProtKB"/>
</dbReference>
<dbReference type="GO" id="GO:0008137">
    <property type="term" value="F:NADH dehydrogenase (ubiquinone) activity"/>
    <property type="evidence" value="ECO:0000250"/>
    <property type="project" value="UniProtKB"/>
</dbReference>
<dbReference type="GO" id="GO:0042773">
    <property type="term" value="P:ATP synthesis coupled electron transport"/>
    <property type="evidence" value="ECO:0007669"/>
    <property type="project" value="InterPro"/>
</dbReference>
<dbReference type="FunFam" id="1.10.287.3510:FF:000002">
    <property type="entry name" value="NADH-ubiquinone oxidoreductase chain 4L"/>
    <property type="match status" value="1"/>
</dbReference>
<dbReference type="Gene3D" id="1.10.287.3510">
    <property type="match status" value="1"/>
</dbReference>
<dbReference type="InterPro" id="IPR001133">
    <property type="entry name" value="NADH_UbQ_OxRdtase_chain4L/K"/>
</dbReference>
<dbReference type="InterPro" id="IPR039428">
    <property type="entry name" value="NUOK/Mnh_C1-like"/>
</dbReference>
<dbReference type="PANTHER" id="PTHR11434:SF0">
    <property type="entry name" value="NADH-UBIQUINONE OXIDOREDUCTASE CHAIN 4L"/>
    <property type="match status" value="1"/>
</dbReference>
<dbReference type="PANTHER" id="PTHR11434">
    <property type="entry name" value="NADH-UBIQUINONE OXIDOREDUCTASE SUBUNIT ND4L"/>
    <property type="match status" value="1"/>
</dbReference>
<dbReference type="Pfam" id="PF00420">
    <property type="entry name" value="Oxidored_q2"/>
    <property type="match status" value="1"/>
</dbReference>
<reference key="1">
    <citation type="journal article" date="1991" name="J. Mol. Evol.">
        <title>The complete nucleotide sequence of the mitochondrial DNA of the fin whale, Balaenoptera physalus.</title>
        <authorList>
            <person name="Arnason U."/>
            <person name="Gullberg A."/>
            <person name="Widegren B."/>
        </authorList>
    </citation>
    <scope>NUCLEOTIDE SEQUENCE [GENOMIC DNA]</scope>
    <source>
        <strain>Isolate No. 27 / Anno 1987</strain>
        <tissue>Liver</tissue>
    </source>
</reference>
<geneLocation type="mitochondrion"/>
<comment type="function">
    <text evidence="1">Core subunit of the mitochondrial membrane respiratory chain NADH dehydrogenase (Complex I) which catalyzes electron transfer from NADH through the respiratory chain, using ubiquinone as an electron acceptor. Part of the enzyme membrane arm which is embedded in the lipid bilayer and involved in proton translocation.</text>
</comment>
<comment type="catalytic activity">
    <reaction evidence="1">
        <text>a ubiquinone + NADH + 5 H(+)(in) = a ubiquinol + NAD(+) + 4 H(+)(out)</text>
        <dbReference type="Rhea" id="RHEA:29091"/>
        <dbReference type="Rhea" id="RHEA-COMP:9565"/>
        <dbReference type="Rhea" id="RHEA-COMP:9566"/>
        <dbReference type="ChEBI" id="CHEBI:15378"/>
        <dbReference type="ChEBI" id="CHEBI:16389"/>
        <dbReference type="ChEBI" id="CHEBI:17976"/>
        <dbReference type="ChEBI" id="CHEBI:57540"/>
        <dbReference type="ChEBI" id="CHEBI:57945"/>
        <dbReference type="EC" id="7.1.1.2"/>
    </reaction>
    <physiologicalReaction direction="left-to-right" evidence="1">
        <dbReference type="Rhea" id="RHEA:29092"/>
    </physiologicalReaction>
</comment>
<comment type="subunit">
    <text evidence="2">Core subunit of respiratory chain NADH dehydrogenase (Complex I) which is composed of 45 different subunits.</text>
</comment>
<comment type="subcellular location">
    <subcellularLocation>
        <location evidence="2">Mitochondrion inner membrane</location>
        <topology evidence="3">Multi-pass membrane protein</topology>
    </subcellularLocation>
</comment>
<comment type="similarity">
    <text evidence="4">Belongs to the complex I subunit 4L family.</text>
</comment>
<name>NU4LM_BALPH</name>
<organism>
    <name type="scientific">Balaenoptera physalus</name>
    <name type="common">Fin whale</name>
    <name type="synonym">Balaena physalus</name>
    <dbReference type="NCBI Taxonomy" id="9770"/>
    <lineage>
        <taxon>Eukaryota</taxon>
        <taxon>Metazoa</taxon>
        <taxon>Chordata</taxon>
        <taxon>Craniata</taxon>
        <taxon>Vertebrata</taxon>
        <taxon>Euteleostomi</taxon>
        <taxon>Mammalia</taxon>
        <taxon>Eutheria</taxon>
        <taxon>Laurasiatheria</taxon>
        <taxon>Artiodactyla</taxon>
        <taxon>Whippomorpha</taxon>
        <taxon>Cetacea</taxon>
        <taxon>Mysticeti</taxon>
        <taxon>Balaenopteridae</taxon>
        <taxon>Balaenoptera</taxon>
    </lineage>
</organism>
<proteinExistence type="inferred from homology"/>
<gene>
    <name type="primary">MT-ND4L</name>
    <name type="synonym">MTND4L</name>
    <name type="synonym">NADH4L</name>
    <name type="synonym">ND4L</name>
</gene>